<evidence type="ECO:0000250" key="1"/>
<evidence type="ECO:0000255" key="2"/>
<evidence type="ECO:0000305" key="3"/>
<reference key="1">
    <citation type="journal article" date="1990" name="Virology">
        <title>Antigenic, sequence, and crystal variation in influenza B neuraminidase.</title>
        <authorList>
            <person name="Air G.M."/>
            <person name="Laver W.G."/>
            <person name="Luo M."/>
            <person name="Stray S.J."/>
            <person name="Legrone G."/>
            <person name="Webster R.G."/>
        </authorList>
    </citation>
    <scope>NUCLEOTIDE SEQUENCE [GENOMIC RNA]</scope>
</reference>
<organismHost>
    <name type="scientific">Homo sapiens</name>
    <name type="common">Human</name>
    <dbReference type="NCBI Taxonomy" id="9606"/>
</organismHost>
<proteinExistence type="inferred from homology"/>
<protein>
    <recommendedName>
        <fullName>Glycoprotein NB</fullName>
    </recommendedName>
</protein>
<dbReference type="EMBL" id="M30634">
    <property type="protein sequence ID" value="AAA43736.1"/>
    <property type="molecule type" value="Genomic_RNA"/>
</dbReference>
<dbReference type="PIR" id="B36825">
    <property type="entry name" value="B36825"/>
</dbReference>
<dbReference type="GlyCosmos" id="P67909">
    <property type="glycosylation" value="2 sites, No reported glycans"/>
</dbReference>
<dbReference type="GO" id="GO:0033644">
    <property type="term" value="C:host cell membrane"/>
    <property type="evidence" value="ECO:0007669"/>
    <property type="project" value="UniProtKB-KW"/>
</dbReference>
<dbReference type="GO" id="GO:0016020">
    <property type="term" value="C:membrane"/>
    <property type="evidence" value="ECO:0007669"/>
    <property type="project" value="UniProtKB-KW"/>
</dbReference>
<dbReference type="GO" id="GO:0055036">
    <property type="term" value="C:virion membrane"/>
    <property type="evidence" value="ECO:0007669"/>
    <property type="project" value="UniProtKB-SubCell"/>
</dbReference>
<dbReference type="GO" id="GO:0015267">
    <property type="term" value="F:channel activity"/>
    <property type="evidence" value="ECO:0007669"/>
    <property type="project" value="UniProtKB-KW"/>
</dbReference>
<dbReference type="GO" id="GO:1902600">
    <property type="term" value="P:proton transmembrane transport"/>
    <property type="evidence" value="ECO:0007669"/>
    <property type="project" value="UniProtKB-KW"/>
</dbReference>
<dbReference type="InterPro" id="IPR007288">
    <property type="entry name" value="InfluenzaB_glycoprotein_NB"/>
</dbReference>
<dbReference type="Pfam" id="PF04159">
    <property type="entry name" value="NB"/>
    <property type="match status" value="1"/>
</dbReference>
<organism>
    <name type="scientific">Influenza B virus (strain B/Memphis/6/1986)</name>
    <dbReference type="NCBI Taxonomy" id="11538"/>
    <lineage>
        <taxon>Viruses</taxon>
        <taxon>Riboviria</taxon>
        <taxon>Orthornavirae</taxon>
        <taxon>Negarnaviricota</taxon>
        <taxon>Polyploviricotina</taxon>
        <taxon>Insthoviricetes</taxon>
        <taxon>Articulavirales</taxon>
        <taxon>Orthomyxoviridae</taxon>
        <taxon>Betainfluenzavirus</taxon>
        <taxon>Betainfluenzavirus influenzae</taxon>
        <taxon>Influenza B virus</taxon>
    </lineage>
</organism>
<sequence>MNNATFNYTNVNPISHIRGSVIITICVSFTVILTVFGYIAKIFTKNNCTNNDIGLRERIKCSGCEPFCNKRDDISSPRTGVDIPSFILPGLNLSESTPN</sequence>
<comment type="function">
    <text evidence="1">Putative viral proton channel. May play a role in virus entry (By similarity).</text>
</comment>
<comment type="subunit">
    <text evidence="1">Dimer.</text>
</comment>
<comment type="subcellular location">
    <subcellularLocation>
        <location evidence="3">Virion membrane</location>
        <topology evidence="3">Single-pass type III membrane protein</topology>
    </subcellularLocation>
</comment>
<comment type="similarity">
    <text evidence="3">Belongs to the influenza viruses type B glycoprotein NB family.</text>
</comment>
<name>VNB_INBME</name>
<feature type="chain" id="PRO_0000078909" description="Glycoprotein NB">
    <location>
        <begin position="1"/>
        <end position="99"/>
    </location>
</feature>
<feature type="topological domain" description="Virion surface" evidence="2">
    <location>
        <begin position="1"/>
        <end position="18"/>
    </location>
</feature>
<feature type="transmembrane region" description="Helical; Signal-anchor for type III membrane protein" evidence="2">
    <location>
        <begin position="19"/>
        <end position="40"/>
    </location>
</feature>
<feature type="topological domain" description="Intravirion" evidence="2">
    <location>
        <begin position="41"/>
        <end position="99"/>
    </location>
</feature>
<feature type="glycosylation site" description="N-linked (GlcNAc...) asparagine; by host" evidence="2">
    <location>
        <position position="3"/>
    </location>
</feature>
<feature type="glycosylation site" description="N-linked (GlcNAc...) asparagine; by host" evidence="2">
    <location>
        <position position="7"/>
    </location>
</feature>
<accession>P67909</accession>
<accession>P16194</accession>
<accession>P16198</accession>
<keyword id="KW-0325">Glycoprotein</keyword>
<keyword id="KW-0375">Hydrogen ion transport</keyword>
<keyword id="KW-0407">Ion channel</keyword>
<keyword id="KW-0406">Ion transport</keyword>
<keyword id="KW-0472">Membrane</keyword>
<keyword id="KW-0735">Signal-anchor</keyword>
<keyword id="KW-0812">Transmembrane</keyword>
<keyword id="KW-1133">Transmembrane helix</keyword>
<keyword id="KW-0813">Transport</keyword>
<keyword id="KW-1182">Viral ion channel</keyword>
<keyword id="KW-0946">Virion</keyword>
<gene>
    <name type="primary">NB</name>
</gene>